<organism evidence="7">
    <name type="scientific">Mus musculus</name>
    <name type="common">Mouse</name>
    <dbReference type="NCBI Taxonomy" id="10090"/>
    <lineage>
        <taxon>Eukaryota</taxon>
        <taxon>Metazoa</taxon>
        <taxon>Chordata</taxon>
        <taxon>Craniata</taxon>
        <taxon>Vertebrata</taxon>
        <taxon>Euteleostomi</taxon>
        <taxon>Mammalia</taxon>
        <taxon>Eutheria</taxon>
        <taxon>Euarchontoglires</taxon>
        <taxon>Glires</taxon>
        <taxon>Rodentia</taxon>
        <taxon>Myomorpha</taxon>
        <taxon>Muroidea</taxon>
        <taxon>Muridae</taxon>
        <taxon>Murinae</taxon>
        <taxon>Mus</taxon>
        <taxon>Mus</taxon>
    </lineage>
</organism>
<proteinExistence type="evidence at protein level"/>
<keyword id="KW-0007">Acetylation</keyword>
<keyword id="KW-0025">Alternative splicing</keyword>
<keyword id="KW-0963">Cytoplasm</keyword>
<keyword id="KW-0227">DNA damage</keyword>
<keyword id="KW-0234">DNA repair</keyword>
<keyword id="KW-0238">DNA-binding</keyword>
<keyword id="KW-0967">Endosome</keyword>
<keyword id="KW-0458">Lysosome</keyword>
<keyword id="KW-0539">Nucleus</keyword>
<keyword id="KW-0597">Phosphoprotein</keyword>
<keyword id="KW-1185">Reference proteome</keyword>
<keyword id="KW-0677">Repeat</keyword>
<keyword id="KW-0833">Ubl conjugation pathway</keyword>
<keyword id="KW-0853">WD repeat</keyword>
<evidence type="ECO:0000250" key="1">
    <source>
        <dbReference type="UniProtKB" id="Q8TAF3"/>
    </source>
</evidence>
<evidence type="ECO:0000255" key="2"/>
<evidence type="ECO:0000256" key="3">
    <source>
        <dbReference type="SAM" id="MobiDB-lite"/>
    </source>
</evidence>
<evidence type="ECO:0000303" key="4">
    <source>
    </source>
</evidence>
<evidence type="ECO:0000303" key="5">
    <source>
    </source>
</evidence>
<evidence type="ECO:0000305" key="6"/>
<evidence type="ECO:0000312" key="7">
    <source>
        <dbReference type="Proteomes" id="UP000000589"/>
    </source>
</evidence>
<evidence type="ECO:0007744" key="8">
    <source>
    </source>
</evidence>
<evidence type="ECO:0007744" key="9">
    <source>
    </source>
</evidence>
<protein>
    <recommendedName>
        <fullName>WD repeat-containing protein 48</fullName>
    </recommendedName>
    <alternativeName>
        <fullName>USP1-associated factor 1</fullName>
    </alternativeName>
</protein>
<gene>
    <name type="primary">Wdr48</name>
    <name type="synonym">Kiaa1449</name>
    <name type="synonym">Uaf1</name>
</gene>
<name>WDR48_MOUSE</name>
<reference key="1">
    <citation type="journal article" date="2003" name="DNA Res.">
        <title>Prediction of the coding sequences of mouse homologues of KIAA gene: II. The complete nucleotide sequences of 400 mouse KIAA-homologous cDNAs identified by screening of terminal sequences of cDNA clones randomly sampled from size-fractionated libraries.</title>
        <authorList>
            <person name="Okazaki N."/>
            <person name="Kikuno R."/>
            <person name="Ohara R."/>
            <person name="Inamoto S."/>
            <person name="Aizawa H."/>
            <person name="Yuasa S."/>
            <person name="Nakajima D."/>
            <person name="Nagase T."/>
            <person name="Ohara O."/>
            <person name="Koga H."/>
        </authorList>
    </citation>
    <scope>NUCLEOTIDE SEQUENCE [LARGE SCALE MRNA] (ISOFORM 1)</scope>
    <source>
        <tissue>Brain</tissue>
    </source>
</reference>
<reference key="2">
    <citation type="submission" date="2003-12" db="EMBL/GenBank/DDBJ databases">
        <authorList>
            <person name="Okazaki N."/>
            <person name="Kikuno R."/>
            <person name="Nagase T."/>
            <person name="Ohara O."/>
            <person name="Koga H."/>
        </authorList>
    </citation>
    <scope>SEQUENCE REVISION</scope>
</reference>
<reference key="3">
    <citation type="journal article" date="2005" name="Science">
        <title>The transcriptional landscape of the mammalian genome.</title>
        <authorList>
            <person name="Carninci P."/>
            <person name="Kasukawa T."/>
            <person name="Katayama S."/>
            <person name="Gough J."/>
            <person name="Frith M.C."/>
            <person name="Maeda N."/>
            <person name="Oyama R."/>
            <person name="Ravasi T."/>
            <person name="Lenhard B."/>
            <person name="Wells C."/>
            <person name="Kodzius R."/>
            <person name="Shimokawa K."/>
            <person name="Bajic V.B."/>
            <person name="Brenner S.E."/>
            <person name="Batalov S."/>
            <person name="Forrest A.R."/>
            <person name="Zavolan M."/>
            <person name="Davis M.J."/>
            <person name="Wilming L.G."/>
            <person name="Aidinis V."/>
            <person name="Allen J.E."/>
            <person name="Ambesi-Impiombato A."/>
            <person name="Apweiler R."/>
            <person name="Aturaliya R.N."/>
            <person name="Bailey T.L."/>
            <person name="Bansal M."/>
            <person name="Baxter L."/>
            <person name="Beisel K.W."/>
            <person name="Bersano T."/>
            <person name="Bono H."/>
            <person name="Chalk A.M."/>
            <person name="Chiu K.P."/>
            <person name="Choudhary V."/>
            <person name="Christoffels A."/>
            <person name="Clutterbuck D.R."/>
            <person name="Crowe M.L."/>
            <person name="Dalla E."/>
            <person name="Dalrymple B.P."/>
            <person name="de Bono B."/>
            <person name="Della Gatta G."/>
            <person name="di Bernardo D."/>
            <person name="Down T."/>
            <person name="Engstrom P."/>
            <person name="Fagiolini M."/>
            <person name="Faulkner G."/>
            <person name="Fletcher C.F."/>
            <person name="Fukushima T."/>
            <person name="Furuno M."/>
            <person name="Futaki S."/>
            <person name="Gariboldi M."/>
            <person name="Georgii-Hemming P."/>
            <person name="Gingeras T.R."/>
            <person name="Gojobori T."/>
            <person name="Green R.E."/>
            <person name="Gustincich S."/>
            <person name="Harbers M."/>
            <person name="Hayashi Y."/>
            <person name="Hensch T.K."/>
            <person name="Hirokawa N."/>
            <person name="Hill D."/>
            <person name="Huminiecki L."/>
            <person name="Iacono M."/>
            <person name="Ikeo K."/>
            <person name="Iwama A."/>
            <person name="Ishikawa T."/>
            <person name="Jakt M."/>
            <person name="Kanapin A."/>
            <person name="Katoh M."/>
            <person name="Kawasawa Y."/>
            <person name="Kelso J."/>
            <person name="Kitamura H."/>
            <person name="Kitano H."/>
            <person name="Kollias G."/>
            <person name="Krishnan S.P."/>
            <person name="Kruger A."/>
            <person name="Kummerfeld S.K."/>
            <person name="Kurochkin I.V."/>
            <person name="Lareau L.F."/>
            <person name="Lazarevic D."/>
            <person name="Lipovich L."/>
            <person name="Liu J."/>
            <person name="Liuni S."/>
            <person name="McWilliam S."/>
            <person name="Madan Babu M."/>
            <person name="Madera M."/>
            <person name="Marchionni L."/>
            <person name="Matsuda H."/>
            <person name="Matsuzawa S."/>
            <person name="Miki H."/>
            <person name="Mignone F."/>
            <person name="Miyake S."/>
            <person name="Morris K."/>
            <person name="Mottagui-Tabar S."/>
            <person name="Mulder N."/>
            <person name="Nakano N."/>
            <person name="Nakauchi H."/>
            <person name="Ng P."/>
            <person name="Nilsson R."/>
            <person name="Nishiguchi S."/>
            <person name="Nishikawa S."/>
            <person name="Nori F."/>
            <person name="Ohara O."/>
            <person name="Okazaki Y."/>
            <person name="Orlando V."/>
            <person name="Pang K.C."/>
            <person name="Pavan W.J."/>
            <person name="Pavesi G."/>
            <person name="Pesole G."/>
            <person name="Petrovsky N."/>
            <person name="Piazza S."/>
            <person name="Reed J."/>
            <person name="Reid J.F."/>
            <person name="Ring B.Z."/>
            <person name="Ringwald M."/>
            <person name="Rost B."/>
            <person name="Ruan Y."/>
            <person name="Salzberg S.L."/>
            <person name="Sandelin A."/>
            <person name="Schneider C."/>
            <person name="Schoenbach C."/>
            <person name="Sekiguchi K."/>
            <person name="Semple C.A."/>
            <person name="Seno S."/>
            <person name="Sessa L."/>
            <person name="Sheng Y."/>
            <person name="Shibata Y."/>
            <person name="Shimada H."/>
            <person name="Shimada K."/>
            <person name="Silva D."/>
            <person name="Sinclair B."/>
            <person name="Sperling S."/>
            <person name="Stupka E."/>
            <person name="Sugiura K."/>
            <person name="Sultana R."/>
            <person name="Takenaka Y."/>
            <person name="Taki K."/>
            <person name="Tammoja K."/>
            <person name="Tan S.L."/>
            <person name="Tang S."/>
            <person name="Taylor M.S."/>
            <person name="Tegner J."/>
            <person name="Teichmann S.A."/>
            <person name="Ueda H.R."/>
            <person name="van Nimwegen E."/>
            <person name="Verardo R."/>
            <person name="Wei C.L."/>
            <person name="Yagi K."/>
            <person name="Yamanishi H."/>
            <person name="Zabarovsky E."/>
            <person name="Zhu S."/>
            <person name="Zimmer A."/>
            <person name="Hide W."/>
            <person name="Bult C."/>
            <person name="Grimmond S.M."/>
            <person name="Teasdale R.D."/>
            <person name="Liu E.T."/>
            <person name="Brusic V."/>
            <person name="Quackenbush J."/>
            <person name="Wahlestedt C."/>
            <person name="Mattick J.S."/>
            <person name="Hume D.A."/>
            <person name="Kai C."/>
            <person name="Sasaki D."/>
            <person name="Tomaru Y."/>
            <person name="Fukuda S."/>
            <person name="Kanamori-Katayama M."/>
            <person name="Suzuki M."/>
            <person name="Aoki J."/>
            <person name="Arakawa T."/>
            <person name="Iida J."/>
            <person name="Imamura K."/>
            <person name="Itoh M."/>
            <person name="Kato T."/>
            <person name="Kawaji H."/>
            <person name="Kawagashira N."/>
            <person name="Kawashima T."/>
            <person name="Kojima M."/>
            <person name="Kondo S."/>
            <person name="Konno H."/>
            <person name="Nakano K."/>
            <person name="Ninomiya N."/>
            <person name="Nishio T."/>
            <person name="Okada M."/>
            <person name="Plessy C."/>
            <person name="Shibata K."/>
            <person name="Shiraki T."/>
            <person name="Suzuki S."/>
            <person name="Tagami M."/>
            <person name="Waki K."/>
            <person name="Watahiki A."/>
            <person name="Okamura-Oho Y."/>
            <person name="Suzuki H."/>
            <person name="Kawai J."/>
            <person name="Hayashizaki Y."/>
        </authorList>
    </citation>
    <scope>NUCLEOTIDE SEQUENCE [LARGE SCALE MRNA] (ISOFORMS 1 AND 3)</scope>
    <source>
        <strain>C57BL/6J</strain>
        <tissue>Brain cortex</tissue>
        <tissue>Cecum</tissue>
        <tissue>Cerebellum</tissue>
        <tissue>Lung</tissue>
        <tissue>Testis</tissue>
        <tissue>Urinary bladder</tissue>
    </source>
</reference>
<reference key="4">
    <citation type="journal article" date="2004" name="Genome Res.">
        <title>The status, quality, and expansion of the NIH full-length cDNA project: the Mammalian Gene Collection (MGC).</title>
        <authorList>
            <consortium name="The MGC Project Team"/>
        </authorList>
    </citation>
    <scope>NUCLEOTIDE SEQUENCE [LARGE SCALE MRNA] (ISOFORMS 1 AND 2)</scope>
    <source>
        <strain>C57BL/6J</strain>
        <strain>FVB/N</strain>
        <tissue>Brain</tissue>
        <tissue>Mammary gland</tissue>
    </source>
</reference>
<reference key="5">
    <citation type="journal article" date="2007" name="Proc. Natl. Acad. Sci. U.S.A.">
        <title>Large-scale phosphorylation analysis of mouse liver.</title>
        <authorList>
            <person name="Villen J."/>
            <person name="Beausoleil S.A."/>
            <person name="Gerber S.A."/>
            <person name="Gygi S.P."/>
        </authorList>
    </citation>
    <scope>IDENTIFICATION BY MASS SPECTROMETRY [LARGE SCALE ANALYSIS]</scope>
    <source>
        <tissue>Liver</tissue>
    </source>
</reference>
<reference key="6">
    <citation type="journal article" date="2008" name="J. Proteome Res.">
        <title>Large-scale identification and evolution indexing of tyrosine phosphorylation sites from murine brain.</title>
        <authorList>
            <person name="Ballif B.A."/>
            <person name="Carey G.R."/>
            <person name="Sunyaev S.R."/>
            <person name="Gygi S.P."/>
        </authorList>
    </citation>
    <scope>PHOSPHORYLATION [LARGE SCALE ANALYSIS] AT TYR-28</scope>
    <scope>IDENTIFICATION BY MASS SPECTROMETRY [LARGE SCALE ANALYSIS]</scope>
    <source>
        <tissue>Brain</tissue>
    </source>
</reference>
<reference key="7">
    <citation type="journal article" date="2010" name="Cell">
        <title>A tissue-specific atlas of mouse protein phosphorylation and expression.</title>
        <authorList>
            <person name="Huttlin E.L."/>
            <person name="Jedrychowski M.P."/>
            <person name="Elias J.E."/>
            <person name="Goswami T."/>
            <person name="Rad R."/>
            <person name="Beausoleil S.A."/>
            <person name="Villen J."/>
            <person name="Haas W."/>
            <person name="Sowa M.E."/>
            <person name="Gygi S.P."/>
        </authorList>
    </citation>
    <scope>IDENTIFICATION BY MASS SPECTROMETRY [LARGE SCALE ANALYSIS]</scope>
    <source>
        <tissue>Brain</tissue>
        <tissue>Brown adipose tissue</tissue>
        <tissue>Heart</tissue>
        <tissue>Kidney</tissue>
        <tissue>Liver</tissue>
        <tissue>Lung</tissue>
        <tissue>Pancreas</tissue>
        <tissue>Spleen</tissue>
        <tissue>Testis</tissue>
    </source>
</reference>
<reference key="8">
    <citation type="journal article" date="2013" name="Mol. Cell">
        <title>SIRT5-mediated lysine desuccinylation impacts diverse metabolic pathways.</title>
        <authorList>
            <person name="Park J."/>
            <person name="Chen Y."/>
            <person name="Tishkoff D.X."/>
            <person name="Peng C."/>
            <person name="Tan M."/>
            <person name="Dai L."/>
            <person name="Xie Z."/>
            <person name="Zhang Y."/>
            <person name="Zwaans B.M."/>
            <person name="Skinner M.E."/>
            <person name="Lombard D.B."/>
            <person name="Zhao Y."/>
        </authorList>
    </citation>
    <scope>ACETYLATION [LARGE SCALE ANALYSIS] AT LYS-578</scope>
    <scope>IDENTIFICATION BY MASS SPECTROMETRY [LARGE SCALE ANALYSIS]</scope>
    <source>
        <tissue>Embryonic fibroblast</tissue>
    </source>
</reference>
<feature type="chain" id="PRO_0000051401" description="WD repeat-containing protein 48">
    <location>
        <begin position="1"/>
        <end position="676"/>
    </location>
</feature>
<feature type="repeat" description="WD 1" evidence="2">
    <location>
        <begin position="28"/>
        <end position="67"/>
    </location>
</feature>
<feature type="repeat" description="WD 2" evidence="2">
    <location>
        <begin position="73"/>
        <end position="112"/>
    </location>
</feature>
<feature type="repeat" description="WD 3" evidence="2">
    <location>
        <begin position="115"/>
        <end position="154"/>
    </location>
</feature>
<feature type="repeat" description="WD 4" evidence="2">
    <location>
        <begin position="166"/>
        <end position="205"/>
    </location>
</feature>
<feature type="repeat" description="WD 5" evidence="2">
    <location>
        <begin position="208"/>
        <end position="247"/>
    </location>
</feature>
<feature type="repeat" description="WD 6" evidence="2">
    <location>
        <begin position="250"/>
        <end position="289"/>
    </location>
</feature>
<feature type="repeat" description="WD 7" evidence="2">
    <location>
        <begin position="292"/>
        <end position="334"/>
    </location>
</feature>
<feature type="repeat" description="WD 8" evidence="2">
    <location>
        <begin position="358"/>
        <end position="397"/>
    </location>
</feature>
<feature type="region of interest" description="Disordered" evidence="3">
    <location>
        <begin position="607"/>
        <end position="628"/>
    </location>
</feature>
<feature type="compositionally biased region" description="Low complexity" evidence="3">
    <location>
        <begin position="609"/>
        <end position="619"/>
    </location>
</feature>
<feature type="modified residue" description="Phosphotyrosine" evidence="8">
    <location>
        <position position="28"/>
    </location>
</feature>
<feature type="modified residue" description="N6-acetyllysine" evidence="1">
    <location>
        <position position="214"/>
    </location>
</feature>
<feature type="modified residue" description="N6-acetyllysine" evidence="9">
    <location>
        <position position="578"/>
    </location>
</feature>
<feature type="modified residue" description="Phosphothreonine" evidence="1">
    <location>
        <position position="613"/>
    </location>
</feature>
<feature type="splice variant" id="VSP_016778" description="In isoform 2." evidence="4">
    <location>
        <begin position="414"/>
        <end position="427"/>
    </location>
</feature>
<feature type="splice variant" id="VSP_016779" description="In isoform 3." evidence="5">
    <original>KNMPKFNKIPFYLQPHASSG</original>
    <variation>VSVLHSHFVLCFSQTLSLTL</variation>
    <location>
        <begin position="557"/>
        <end position="576"/>
    </location>
</feature>
<feature type="splice variant" id="VSP_016780" description="In isoform 3." evidence="5">
    <location>
        <begin position="577"/>
        <end position="676"/>
    </location>
</feature>
<feature type="sequence conflict" description="In Ref. 3; BAC29218." evidence="6" ref="3">
    <original>C</original>
    <variation>S</variation>
    <location>
        <position position="85"/>
    </location>
</feature>
<feature type="sequence conflict" description="In Ref. 1; BAC65793." evidence="6" ref="1">
    <original>S</original>
    <variation>F</variation>
    <location>
        <position position="238"/>
    </location>
</feature>
<feature type="sequence conflict" description="In Ref. 3; BAC31719." evidence="6" ref="3">
    <original>C</original>
    <variation>W</variation>
    <location>
        <position position="642"/>
    </location>
</feature>
<sequence length="676" mass="76007">MAAHHRQNTAGRRKVQVSYVIRDEVEKYNRNGVNALQLDPALNRLFTAGRDSIIRIWSVNQHKQDPYIASMEHHTDWVNDVVLCCNGKTLISASSDTTVKVWNAHKGFCMSTLRTHKDYVKALAYAKDKELVASAGLDRQIFLWDVNTLTALTASNNTVTTSSLSGNKDSIYSLAMNQLGTIIVSGSTEKVLRVWDPRTCAKLMKLKGHTDNVKALLLHRDGTQCLSGSSDGTIRLWSLGQQRCIATYRVHDEGVWALQVNDAFTHVYSGGRDRKIYCTDLRNPDIRVLICEEKAPVLKMELDRSADPPPAIWVATTKSTVNKWTLKGIHNFRASGDYDNDCTNPITPLCTQPDQVIKGGASIIQCHILNDKRHILTKDTNNNVAYWDVLKACKVEDLGKVDFEDEIKKRFKMVYVPNWFSVDLKTGMLTITLDESDCFAAWVSAKDAGFSSPDGSDPKLNLGGLLLQALLEYWPRTHVTPMDEEENEVNHVSGGQESRVQKGNGYFQVPPHTPVIFGEAGGRTLFRLLCRDSGGETEAMLLNETVPQWVIDITVDKNMPKFNKIPFYLQPHASSGAKTLKKDRLSASDMLQVRKVMEHVYEKIINLDNESQTTSSSNNEKPEQEKEEDIAVLAEEKIELLCQDQVLDPNMDLRTVKHFIWKSGGDLTLHYRQKST</sequence>
<accession>Q8BH57</accession>
<accession>Q80TD4</accession>
<accession>Q80XI0</accession>
<accession>Q8BRM0</accession>
<accession>Q8CBK0</accession>
<accession>Q922Z9</accession>
<accession>Q9CRR1</accession>
<accession>Q9CSL0</accession>
<dbReference type="EMBL" id="AK122511">
    <property type="protein sequence ID" value="BAC65793.3"/>
    <property type="status" value="ALT_INIT"/>
    <property type="molecule type" value="mRNA"/>
</dbReference>
<dbReference type="EMBL" id="AK012599">
    <property type="protein sequence ID" value="BAB28345.1"/>
    <property type="molecule type" value="mRNA"/>
</dbReference>
<dbReference type="EMBL" id="AK018396">
    <property type="protein sequence ID" value="BAB31193.3"/>
    <property type="status" value="ALT_TERM"/>
    <property type="molecule type" value="mRNA"/>
</dbReference>
<dbReference type="EMBL" id="AK030041">
    <property type="protein sequence ID" value="BAC26755.1"/>
    <property type="molecule type" value="mRNA"/>
</dbReference>
<dbReference type="EMBL" id="AK033631">
    <property type="protein sequence ID" value="BAC28400.1"/>
    <property type="molecule type" value="mRNA"/>
</dbReference>
<dbReference type="EMBL" id="AK035273">
    <property type="protein sequence ID" value="BAC29010.1"/>
    <property type="molecule type" value="mRNA"/>
</dbReference>
<dbReference type="EMBL" id="AK035864">
    <property type="protein sequence ID" value="BAC29218.1"/>
    <property type="molecule type" value="mRNA"/>
</dbReference>
<dbReference type="EMBL" id="AK043970">
    <property type="protein sequence ID" value="BAC31719.1"/>
    <property type="molecule type" value="mRNA"/>
</dbReference>
<dbReference type="EMBL" id="BC006679">
    <property type="protein sequence ID" value="AAH06679.1"/>
    <property type="molecule type" value="mRNA"/>
</dbReference>
<dbReference type="EMBL" id="BC048155">
    <property type="protein sequence ID" value="AAH48155.1"/>
    <property type="molecule type" value="mRNA"/>
</dbReference>
<dbReference type="EMBL" id="BC062967">
    <property type="protein sequence ID" value="AAH62967.1"/>
    <property type="molecule type" value="mRNA"/>
</dbReference>
<dbReference type="CCDS" id="CCDS23618.1">
    <molecule id="Q8BH57-1"/>
</dbReference>
<dbReference type="RefSeq" id="NP_001404764.1">
    <molecule id="Q8BH57-2"/>
    <property type="nucleotide sequence ID" value="NM_001417835.1"/>
</dbReference>
<dbReference type="RefSeq" id="NP_080512.1">
    <molecule id="Q8BH57-1"/>
    <property type="nucleotide sequence ID" value="NM_026236.4"/>
</dbReference>
<dbReference type="SMR" id="Q8BH57"/>
<dbReference type="BioGRID" id="212277">
    <property type="interactions" value="66"/>
</dbReference>
<dbReference type="FunCoup" id="Q8BH57">
    <property type="interactions" value="6024"/>
</dbReference>
<dbReference type="IntAct" id="Q8BH57">
    <property type="interactions" value="24"/>
</dbReference>
<dbReference type="MINT" id="Q8BH57"/>
<dbReference type="STRING" id="10090.ENSMUSP00000042509"/>
<dbReference type="iPTMnet" id="Q8BH57"/>
<dbReference type="PhosphoSitePlus" id="Q8BH57"/>
<dbReference type="SwissPalm" id="Q8BH57"/>
<dbReference type="jPOST" id="Q8BH57"/>
<dbReference type="PaxDb" id="10090-ENSMUSP00000042509"/>
<dbReference type="PeptideAtlas" id="Q8BH57"/>
<dbReference type="ProteomicsDB" id="275199">
    <molecule id="Q8BH57-1"/>
</dbReference>
<dbReference type="ProteomicsDB" id="275200">
    <molecule id="Q8BH57-2"/>
</dbReference>
<dbReference type="ProteomicsDB" id="275201">
    <molecule id="Q8BH57-3"/>
</dbReference>
<dbReference type="Pumba" id="Q8BH57"/>
<dbReference type="Antibodypedia" id="50460">
    <property type="antibodies" value="124 antibodies from 25 providers"/>
</dbReference>
<dbReference type="DNASU" id="67561"/>
<dbReference type="Ensembl" id="ENSMUST00000036561.8">
    <molecule id="Q8BH57-1"/>
    <property type="protein sequence ID" value="ENSMUSP00000042509.7"/>
    <property type="gene ID" value="ENSMUSG00000032512.8"/>
</dbReference>
<dbReference type="Ensembl" id="ENSMUST00000215307.2">
    <molecule id="Q8BH57-2"/>
    <property type="protein sequence ID" value="ENSMUSP00000149478.2"/>
    <property type="gene ID" value="ENSMUSG00000032512.8"/>
</dbReference>
<dbReference type="Ensembl" id="ENSMUST00000217472.2">
    <molecule id="Q8BH57-3"/>
    <property type="protein sequence ID" value="ENSMUSP00000150321.2"/>
    <property type="gene ID" value="ENSMUSG00000032512.8"/>
</dbReference>
<dbReference type="GeneID" id="67561"/>
<dbReference type="KEGG" id="mmu:67561"/>
<dbReference type="UCSC" id="uc009sbm.1">
    <molecule id="Q8BH57-3"/>
    <property type="organism name" value="mouse"/>
</dbReference>
<dbReference type="UCSC" id="uc009sbn.1">
    <molecule id="Q8BH57-1"/>
    <property type="organism name" value="mouse"/>
</dbReference>
<dbReference type="UCSC" id="uc009sbo.1">
    <molecule id="Q8BH57-2"/>
    <property type="organism name" value="mouse"/>
</dbReference>
<dbReference type="AGR" id="MGI:1914811"/>
<dbReference type="CTD" id="57599"/>
<dbReference type="MGI" id="MGI:1914811">
    <property type="gene designation" value="Wdr48"/>
</dbReference>
<dbReference type="VEuPathDB" id="HostDB:ENSMUSG00000032512"/>
<dbReference type="eggNOG" id="KOG0308">
    <property type="taxonomic scope" value="Eukaryota"/>
</dbReference>
<dbReference type="GeneTree" id="ENSGT00920000149157"/>
<dbReference type="HOGENOM" id="CLU_014960_0_1_1"/>
<dbReference type="InParanoid" id="Q8BH57"/>
<dbReference type="OMA" id="IRHYHIL"/>
<dbReference type="OrthoDB" id="2421129at2759"/>
<dbReference type="PhylomeDB" id="Q8BH57"/>
<dbReference type="TreeFam" id="TF315205"/>
<dbReference type="Reactome" id="R-MMU-110314">
    <property type="pathway name" value="Recognition of DNA damage by PCNA-containing replication complex"/>
</dbReference>
<dbReference type="Reactome" id="R-MMU-5689880">
    <property type="pathway name" value="Ub-specific processing proteases"/>
</dbReference>
<dbReference type="Reactome" id="R-MMU-6783310">
    <property type="pathway name" value="Fanconi Anemia Pathway"/>
</dbReference>
<dbReference type="BioGRID-ORCS" id="67561">
    <property type="hits" value="23 hits in 119 CRISPR screens"/>
</dbReference>
<dbReference type="CD-CODE" id="CE726F99">
    <property type="entry name" value="Postsynaptic density"/>
</dbReference>
<dbReference type="ChiTaRS" id="Wdr48">
    <property type="organism name" value="mouse"/>
</dbReference>
<dbReference type="PRO" id="PR:Q8BH57"/>
<dbReference type="Proteomes" id="UP000000589">
    <property type="component" value="Chromosome 9"/>
</dbReference>
<dbReference type="RNAct" id="Q8BH57">
    <property type="molecule type" value="protein"/>
</dbReference>
<dbReference type="Bgee" id="ENSMUSG00000032512">
    <property type="expression patterns" value="Expressed in spermatocyte and 258 other cell types or tissues"/>
</dbReference>
<dbReference type="ExpressionAtlas" id="Q8BH57">
    <property type="expression patterns" value="baseline and differential"/>
</dbReference>
<dbReference type="GO" id="GO:0005770">
    <property type="term" value="C:late endosome"/>
    <property type="evidence" value="ECO:0007669"/>
    <property type="project" value="UniProtKB-SubCell"/>
</dbReference>
<dbReference type="GO" id="GO:0005764">
    <property type="term" value="C:lysosome"/>
    <property type="evidence" value="ECO:0007669"/>
    <property type="project" value="UniProtKB-SubCell"/>
</dbReference>
<dbReference type="GO" id="GO:0005634">
    <property type="term" value="C:nucleus"/>
    <property type="evidence" value="ECO:0000250"/>
    <property type="project" value="UniProtKB"/>
</dbReference>
<dbReference type="GO" id="GO:0035800">
    <property type="term" value="F:deubiquitinase activator activity"/>
    <property type="evidence" value="ECO:0000250"/>
    <property type="project" value="UniProtKB"/>
</dbReference>
<dbReference type="GO" id="GO:0003677">
    <property type="term" value="F:DNA binding"/>
    <property type="evidence" value="ECO:0000250"/>
    <property type="project" value="UniProtKB"/>
</dbReference>
<dbReference type="GO" id="GO:0003690">
    <property type="term" value="F:double-stranded DNA binding"/>
    <property type="evidence" value="ECO:0000250"/>
    <property type="project" value="UniProtKB"/>
</dbReference>
<dbReference type="GO" id="GO:0003697">
    <property type="term" value="F:single-stranded DNA binding"/>
    <property type="evidence" value="ECO:0000250"/>
    <property type="project" value="UniProtKB"/>
</dbReference>
<dbReference type="GO" id="GO:0006974">
    <property type="term" value="P:DNA damage response"/>
    <property type="evidence" value="ECO:0000315"/>
    <property type="project" value="MGI"/>
</dbReference>
<dbReference type="GO" id="GO:0000724">
    <property type="term" value="P:double-strand break repair via homologous recombination"/>
    <property type="evidence" value="ECO:0000315"/>
    <property type="project" value="MGI"/>
</dbReference>
<dbReference type="GO" id="GO:0048568">
    <property type="term" value="P:embryonic organ development"/>
    <property type="evidence" value="ECO:0000315"/>
    <property type="project" value="MGI"/>
</dbReference>
<dbReference type="GO" id="GO:0048872">
    <property type="term" value="P:homeostasis of number of cells"/>
    <property type="evidence" value="ECO:0000315"/>
    <property type="project" value="MGI"/>
</dbReference>
<dbReference type="GO" id="GO:0008584">
    <property type="term" value="P:male gonad development"/>
    <property type="evidence" value="ECO:0000315"/>
    <property type="project" value="MGI"/>
</dbReference>
<dbReference type="GO" id="GO:0035264">
    <property type="term" value="P:multicellular organism growth"/>
    <property type="evidence" value="ECO:0000315"/>
    <property type="project" value="MGI"/>
</dbReference>
<dbReference type="GO" id="GO:1905168">
    <property type="term" value="P:positive regulation of double-strand break repair via homologous recombination"/>
    <property type="evidence" value="ECO:0000250"/>
    <property type="project" value="UniProtKB"/>
</dbReference>
<dbReference type="GO" id="GO:0050679">
    <property type="term" value="P:positive regulation of epithelial cell proliferation"/>
    <property type="evidence" value="ECO:0000315"/>
    <property type="project" value="MGI"/>
</dbReference>
<dbReference type="GO" id="GO:0046427">
    <property type="term" value="P:positive regulation of receptor signaling pathway via JAK-STAT"/>
    <property type="evidence" value="ECO:0007669"/>
    <property type="project" value="Ensembl"/>
</dbReference>
<dbReference type="GO" id="GO:1902525">
    <property type="term" value="P:regulation of protein monoubiquitination"/>
    <property type="evidence" value="ECO:0000315"/>
    <property type="project" value="MGI"/>
</dbReference>
<dbReference type="GO" id="GO:0072520">
    <property type="term" value="P:seminiferous tubule development"/>
    <property type="evidence" value="ECO:0000315"/>
    <property type="project" value="MGI"/>
</dbReference>
<dbReference type="GO" id="GO:0007338">
    <property type="term" value="P:single fertilization"/>
    <property type="evidence" value="ECO:0000315"/>
    <property type="project" value="MGI"/>
</dbReference>
<dbReference type="GO" id="GO:0048705">
    <property type="term" value="P:skeletal system morphogenesis"/>
    <property type="evidence" value="ECO:0000315"/>
    <property type="project" value="MGI"/>
</dbReference>
<dbReference type="GO" id="GO:0043588">
    <property type="term" value="P:skin development"/>
    <property type="evidence" value="ECO:0000315"/>
    <property type="project" value="MGI"/>
</dbReference>
<dbReference type="GO" id="GO:0007283">
    <property type="term" value="P:spermatogenesis"/>
    <property type="evidence" value="ECO:0000315"/>
    <property type="project" value="MGI"/>
</dbReference>
<dbReference type="CDD" id="cd17041">
    <property type="entry name" value="Ubl_WDR48"/>
    <property type="match status" value="1"/>
</dbReference>
<dbReference type="CDD" id="cd00200">
    <property type="entry name" value="WD40"/>
    <property type="match status" value="1"/>
</dbReference>
<dbReference type="FunFam" id="2.130.10.10:FF:000054">
    <property type="entry name" value="Putative WD repeat-containing protein 48"/>
    <property type="match status" value="1"/>
</dbReference>
<dbReference type="FunFam" id="2.130.10.10:FF:002031">
    <property type="entry name" value="WD repeat domain 48b"/>
    <property type="match status" value="1"/>
</dbReference>
<dbReference type="Gene3D" id="2.130.10.10">
    <property type="entry name" value="YVTN repeat-like/Quinoprotein amine dehydrogenase"/>
    <property type="match status" value="2"/>
</dbReference>
<dbReference type="InterPro" id="IPR020472">
    <property type="entry name" value="G-protein_beta_WD-40_rep"/>
</dbReference>
<dbReference type="InterPro" id="IPR015943">
    <property type="entry name" value="WD40/YVTN_repeat-like_dom_sf"/>
</dbReference>
<dbReference type="InterPro" id="IPR019775">
    <property type="entry name" value="WD40_repeat_CS"/>
</dbReference>
<dbReference type="InterPro" id="IPR036322">
    <property type="entry name" value="WD40_repeat_dom_sf"/>
</dbReference>
<dbReference type="InterPro" id="IPR001680">
    <property type="entry name" value="WD40_rpt"/>
</dbReference>
<dbReference type="InterPro" id="IPR051246">
    <property type="entry name" value="WDR48"/>
</dbReference>
<dbReference type="InterPro" id="IPR021772">
    <property type="entry name" value="WDR48/Bun107"/>
</dbReference>
<dbReference type="PANTHER" id="PTHR19862">
    <property type="entry name" value="WD REPEAT-CONTAINING PROTEIN 48"/>
    <property type="match status" value="1"/>
</dbReference>
<dbReference type="PANTHER" id="PTHR19862:SF14">
    <property type="entry name" value="WD REPEAT-CONTAINING PROTEIN 48"/>
    <property type="match status" value="1"/>
</dbReference>
<dbReference type="Pfam" id="PF11816">
    <property type="entry name" value="DUF3337"/>
    <property type="match status" value="1"/>
</dbReference>
<dbReference type="Pfam" id="PF00400">
    <property type="entry name" value="WD40"/>
    <property type="match status" value="6"/>
</dbReference>
<dbReference type="PRINTS" id="PR00320">
    <property type="entry name" value="GPROTEINBRPT"/>
</dbReference>
<dbReference type="SMART" id="SM00320">
    <property type="entry name" value="WD40"/>
    <property type="match status" value="7"/>
</dbReference>
<dbReference type="SUPFAM" id="SSF50978">
    <property type="entry name" value="WD40 repeat-like"/>
    <property type="match status" value="1"/>
</dbReference>
<dbReference type="PROSITE" id="PS00678">
    <property type="entry name" value="WD_REPEATS_1"/>
    <property type="match status" value="2"/>
</dbReference>
<dbReference type="PROSITE" id="PS50082">
    <property type="entry name" value="WD_REPEATS_2"/>
    <property type="match status" value="5"/>
</dbReference>
<dbReference type="PROSITE" id="PS50294">
    <property type="entry name" value="WD_REPEATS_REGION"/>
    <property type="match status" value="4"/>
</dbReference>
<comment type="function">
    <text evidence="1">Regulator of deubiquitinating complexes, which acts as a strong activator of USP1, USP12 and USP46. Enhances the USP1-mediated deubiquitination of FANCD2; USP1 being almost inactive by itself. Activates deubiquitination by increasing the catalytic turnover without increasing the affinity of deubiquitinating enzymes for the substrate. Also activates deubiquitinating activity of complexes containing USP12. Docks at the distal end of the USP12 fingers domain and induces a cascade of structural changes leading to the activation of the enzyme. Together with RAD51AP1, promotes DNA repair by stimulating RAD51-mediated homologous recombination. Binds single-stranded DNA (ssDNA) and double-stranded DNA (dsDNA). DNA-binding is required both for USP1-mediated deubiquitination of FANCD2 and stimulation of RAD51-mediated homologous recombination: both WDR48/UAF1 and RAD51AP1 have coordinated role in DNA-binding during these processes. Together with ATAD5 and by regulating USP1 activity, has a role in PCNA-mediated translesion synthesis (TLS) by deubiquitinating monoubiquitinated PCNA. Together with ATAD5, has a role in recruiting RAD51 to stalled forks during replication stress.</text>
</comment>
<comment type="subunit">
    <text evidence="1">Interacts with USP46. Interacts with USP1. Interacts with USP12. Component of the USP12-WDR20-WDR48 deubiquitinating complex. Component of the USP12-DMWD-WDR48 deubiquitinating complex. Interacts with PHLPP1. Interacts with RAD51AP1; the interaction is direct and promotes formation of a trimeric complex with RAD51 via RAD51AP1. Interacts with ATAD5; the interaction regulates USP1-mediated PCNA deubiquitination. Interacts with RAD51; the interaction is enhanced under replication stress. Interacts with ITCH; the interaction is more efficient when both USP12 and WDR48/UAF1 are involved and may facilitate recruitment of the USP12 deubiquitinating complex to Notch.</text>
</comment>
<comment type="subcellular location">
    <subcellularLocation>
        <location evidence="1">Nucleus</location>
    </subcellularLocation>
    <subcellularLocation>
        <location evidence="1">Cytoplasm</location>
    </subcellularLocation>
    <subcellularLocation>
        <location evidence="1">Lysosome</location>
    </subcellularLocation>
    <subcellularLocation>
        <location evidence="1">Late endosome</location>
    </subcellularLocation>
    <text evidence="1">Mainly in cytoplasmic compartments.</text>
</comment>
<comment type="alternative products">
    <event type="alternative splicing"/>
    <isoform>
        <id>Q8BH57-1</id>
        <name>1</name>
        <sequence type="displayed"/>
    </isoform>
    <isoform>
        <id>Q8BH57-2</id>
        <name>2</name>
        <sequence type="described" ref="VSP_016778"/>
    </isoform>
    <isoform>
        <id>Q8BH57-3</id>
        <name>3</name>
        <sequence type="described" ref="VSP_016779 VSP_016780"/>
    </isoform>
</comment>
<comment type="domain">
    <text evidence="1">The WD repeats are required for the interaction with deubiquitinating enzymes USP1, USP12 and USP46.</text>
</comment>
<comment type="similarity">
    <text evidence="6">Belongs to the WD repeat WDR48 family.</text>
</comment>
<comment type="sequence caution" evidence="6">
    <conflict type="erroneous initiation">
        <sequence resource="EMBL-CDS" id="BAC65793"/>
    </conflict>
</comment>